<keyword id="KW-0067">ATP-binding</keyword>
<keyword id="KW-0547">Nucleotide-binding</keyword>
<keyword id="KW-1185">Reference proteome</keyword>
<keyword id="KW-0813">Transport</keyword>
<dbReference type="EMBL" id="U00096">
    <property type="protein sequence ID" value="AAC73238.1"/>
    <property type="molecule type" value="Genomic_DNA"/>
</dbReference>
<dbReference type="EMBL" id="AP009048">
    <property type="protein sequence ID" value="BAB96703.1"/>
    <property type="molecule type" value="Genomic_DNA"/>
</dbReference>
<dbReference type="PIR" id="S45204">
    <property type="entry name" value="S45204"/>
</dbReference>
<dbReference type="RefSeq" id="NP_414669.1">
    <property type="nucleotide sequence ID" value="NC_000913.3"/>
</dbReference>
<dbReference type="RefSeq" id="WP_000150637.1">
    <property type="nucleotide sequence ID" value="NZ_STEB01000010.1"/>
</dbReference>
<dbReference type="SMR" id="P36879"/>
<dbReference type="BioGRID" id="4261962">
    <property type="interactions" value="19"/>
</dbReference>
<dbReference type="BioGRID" id="849233">
    <property type="interactions" value="1"/>
</dbReference>
<dbReference type="DIP" id="DIP-11185N"/>
<dbReference type="FunCoup" id="P36879">
    <property type="interactions" value="428"/>
</dbReference>
<dbReference type="IntAct" id="P36879">
    <property type="interactions" value="20"/>
</dbReference>
<dbReference type="STRING" id="511145.b0127"/>
<dbReference type="TCDB" id="3.A.1.105.17">
    <property type="family name" value="the atp-binding cassette (abc) superfamily"/>
</dbReference>
<dbReference type="jPOST" id="P36879"/>
<dbReference type="PaxDb" id="511145-b0127"/>
<dbReference type="EnsemblBacteria" id="AAC73238">
    <property type="protein sequence ID" value="AAC73238"/>
    <property type="gene ID" value="b0127"/>
</dbReference>
<dbReference type="GeneID" id="944833"/>
<dbReference type="KEGG" id="ecj:JW0123"/>
<dbReference type="KEGG" id="eco:b0127"/>
<dbReference type="KEGG" id="ecoc:C3026_00540"/>
<dbReference type="PATRIC" id="fig|1411691.4.peg.2155"/>
<dbReference type="EchoBASE" id="EB2225"/>
<dbReference type="eggNOG" id="COG1131">
    <property type="taxonomic scope" value="Bacteria"/>
</dbReference>
<dbReference type="HOGENOM" id="CLU_000604_1_2_6"/>
<dbReference type="InParanoid" id="P36879"/>
<dbReference type="OMA" id="CGRIAML"/>
<dbReference type="OrthoDB" id="9775490at2"/>
<dbReference type="PhylomeDB" id="P36879"/>
<dbReference type="BioCyc" id="EcoCyc:YADG-MONOMER"/>
<dbReference type="PRO" id="PR:P36879"/>
<dbReference type="Proteomes" id="UP000000625">
    <property type="component" value="Chromosome"/>
</dbReference>
<dbReference type="GO" id="GO:0005886">
    <property type="term" value="C:plasma membrane"/>
    <property type="evidence" value="ECO:0000314"/>
    <property type="project" value="EcoCyc"/>
</dbReference>
<dbReference type="GO" id="GO:0005524">
    <property type="term" value="F:ATP binding"/>
    <property type="evidence" value="ECO:0007669"/>
    <property type="project" value="UniProtKB-KW"/>
</dbReference>
<dbReference type="GO" id="GO:0016887">
    <property type="term" value="F:ATP hydrolysis activity"/>
    <property type="evidence" value="ECO:0007669"/>
    <property type="project" value="InterPro"/>
</dbReference>
<dbReference type="GO" id="GO:0010165">
    <property type="term" value="P:response to X-ray"/>
    <property type="evidence" value="ECO:0000315"/>
    <property type="project" value="EcoCyc"/>
</dbReference>
<dbReference type="CDD" id="cd03230">
    <property type="entry name" value="ABC_DR_subfamily_A"/>
    <property type="match status" value="1"/>
</dbReference>
<dbReference type="FunFam" id="3.40.50.300:FF:000361">
    <property type="entry name" value="Multidrug ABC transporter ATP-binding protein"/>
    <property type="match status" value="1"/>
</dbReference>
<dbReference type="Gene3D" id="3.40.50.300">
    <property type="entry name" value="P-loop containing nucleotide triphosphate hydrolases"/>
    <property type="match status" value="1"/>
</dbReference>
<dbReference type="InterPro" id="IPR003593">
    <property type="entry name" value="AAA+_ATPase"/>
</dbReference>
<dbReference type="InterPro" id="IPR003439">
    <property type="entry name" value="ABC_transporter-like_ATP-bd"/>
</dbReference>
<dbReference type="InterPro" id="IPR017871">
    <property type="entry name" value="ABC_transporter-like_CS"/>
</dbReference>
<dbReference type="InterPro" id="IPR050763">
    <property type="entry name" value="ABC_transporter_ATP-binding"/>
</dbReference>
<dbReference type="InterPro" id="IPR027417">
    <property type="entry name" value="P-loop_NTPase"/>
</dbReference>
<dbReference type="PANTHER" id="PTHR42711">
    <property type="entry name" value="ABC TRANSPORTER ATP-BINDING PROTEIN"/>
    <property type="match status" value="1"/>
</dbReference>
<dbReference type="PANTHER" id="PTHR42711:SF15">
    <property type="entry name" value="ABC-TYPE MULTIDRUG TRANSPORT SYSTEM, ATPASE COMPONENT"/>
    <property type="match status" value="1"/>
</dbReference>
<dbReference type="Pfam" id="PF00005">
    <property type="entry name" value="ABC_tran"/>
    <property type="match status" value="1"/>
</dbReference>
<dbReference type="SMART" id="SM00382">
    <property type="entry name" value="AAA"/>
    <property type="match status" value="1"/>
</dbReference>
<dbReference type="SUPFAM" id="SSF52540">
    <property type="entry name" value="P-loop containing nucleoside triphosphate hydrolases"/>
    <property type="match status" value="1"/>
</dbReference>
<dbReference type="PROSITE" id="PS00211">
    <property type="entry name" value="ABC_TRANSPORTER_1"/>
    <property type="match status" value="1"/>
</dbReference>
<dbReference type="PROSITE" id="PS50893">
    <property type="entry name" value="ABC_TRANSPORTER_2"/>
    <property type="match status" value="1"/>
</dbReference>
<reference key="1">
    <citation type="journal article" date="1994" name="Nucleic Acids Res.">
        <title>Systematic sequencing of the Escherichia coli genome: analysis of the 2.4-4.1 min (110,917-193,643 bp) region.</title>
        <authorList>
            <person name="Fujita N."/>
            <person name="Mori H."/>
            <person name="Yura T."/>
            <person name="Ishihama A."/>
        </authorList>
    </citation>
    <scope>NUCLEOTIDE SEQUENCE [LARGE SCALE GENOMIC DNA]</scope>
    <source>
        <strain>K12 / W3110 / ATCC 27325 / DSM 5911</strain>
    </source>
</reference>
<reference key="2">
    <citation type="journal article" date="1997" name="Science">
        <title>The complete genome sequence of Escherichia coli K-12.</title>
        <authorList>
            <person name="Blattner F.R."/>
            <person name="Plunkett G. III"/>
            <person name="Bloch C.A."/>
            <person name="Perna N.T."/>
            <person name="Burland V."/>
            <person name="Riley M."/>
            <person name="Collado-Vides J."/>
            <person name="Glasner J.D."/>
            <person name="Rode C.K."/>
            <person name="Mayhew G.F."/>
            <person name="Gregor J."/>
            <person name="Davis N.W."/>
            <person name="Kirkpatrick H.A."/>
            <person name="Goeden M.A."/>
            <person name="Rose D.J."/>
            <person name="Mau B."/>
            <person name="Shao Y."/>
        </authorList>
    </citation>
    <scope>NUCLEOTIDE SEQUENCE [LARGE SCALE GENOMIC DNA]</scope>
    <source>
        <strain>K12 / MG1655 / ATCC 47076</strain>
    </source>
</reference>
<reference key="3">
    <citation type="journal article" date="2006" name="Mol. Syst. Biol.">
        <title>Highly accurate genome sequences of Escherichia coli K-12 strains MG1655 and W3110.</title>
        <authorList>
            <person name="Hayashi K."/>
            <person name="Morooka N."/>
            <person name="Yamamoto Y."/>
            <person name="Fujita K."/>
            <person name="Isono K."/>
            <person name="Choi S."/>
            <person name="Ohtsubo E."/>
            <person name="Baba T."/>
            <person name="Wanner B.L."/>
            <person name="Mori H."/>
            <person name="Horiuchi T."/>
        </authorList>
    </citation>
    <scope>NUCLEOTIDE SEQUENCE [LARGE SCALE GENOMIC DNA]</scope>
    <source>
        <strain>K12 / W3110 / ATCC 27325 / DSM 5911</strain>
    </source>
</reference>
<reference key="4">
    <citation type="journal article" date="2015" name="Cell Biochem. Biophys.">
        <title>Construction of 2,4,6-trinitrotoluene biosensors with novel sensing elements from Escherichia coli K-12 MG1655.</title>
        <authorList>
            <person name="Tan J."/>
            <person name="Kan N."/>
            <person name="Wang W."/>
            <person name="Ling J."/>
            <person name="Qu G."/>
            <person name="Jin J."/>
            <person name="Shao Y."/>
            <person name="Liu G."/>
            <person name="Chen H."/>
        </authorList>
    </citation>
    <scope>INDUCTION BY 2,4,6-TRINITROTOLUENE</scope>
    <scope>BIOTECHNOLOGY</scope>
    <source>
        <strain>K12 / MG1655 / ATCC 47076</strain>
    </source>
</reference>
<comment type="interaction">
    <interactant intactId="EBI-550911">
        <id>P36879</id>
    </interactant>
    <interactant intactId="EBI-549514">
        <id>P69910</id>
        <label>gadB</label>
    </interactant>
    <organismsDiffer>false</organismsDiffer>
    <experiments>2</experiments>
</comment>
<comment type="induction">
    <text evidence="2">Transcription is increased specifically in response to 2,4,6-trinitrotoluene (TNT) and its indicator compounds 1,3-DNB, 2,4-DNT, and 2,6-DNT.</text>
</comment>
<comment type="biotechnology">
    <text evidence="2">Has been used to construct a 2,4,6-trinitrotoluene (TNT) biosensor strain.</text>
</comment>
<comment type="similarity">
    <text evidence="3">Belongs to the ABC transporter superfamily.</text>
</comment>
<name>YADG_ECOLI</name>
<evidence type="ECO:0000255" key="1">
    <source>
        <dbReference type="PROSITE-ProRule" id="PRU00434"/>
    </source>
</evidence>
<evidence type="ECO:0000269" key="2">
    <source>
    </source>
</evidence>
<evidence type="ECO:0000305" key="3"/>
<sequence length="308" mass="34647">MTIALELQQLKKTYPGGVQALRGIDLQVEAGDFYALLGPNGAGKSTTIGIISSLVNKTSGRVSVFGYDLEKDVVNAKRQLGLVPQEFNFNPFETVQQIVVNQAGYYGVERKEAYIRSEKYLKQLDLWGKRNERARMLSGGMKRRLMIARALMHEPKLLILDEPTAGVDIELRRSMWGFLKDLNDKGTTIILTTHYLEEAEMLCRNIGIIQHGELVENTSMKALLAKLKSETFILDLAPKSPLPKLDGYQYRLVDTATLEVEVLREQGINSVFTQLSEQGIQVLSMRNKANRLEELFVSLVNEKQGDRA</sequence>
<feature type="chain" id="PRO_0000093151" description="Uncharacterized ABC transporter ATP-binding protein YadG">
    <location>
        <begin position="1"/>
        <end position="308"/>
    </location>
</feature>
<feature type="domain" description="ABC transporter" evidence="1">
    <location>
        <begin position="5"/>
        <end position="236"/>
    </location>
</feature>
<feature type="binding site" evidence="1">
    <location>
        <begin position="38"/>
        <end position="45"/>
    </location>
    <ligand>
        <name>ATP</name>
        <dbReference type="ChEBI" id="CHEBI:30616"/>
    </ligand>
</feature>
<protein>
    <recommendedName>
        <fullName>Uncharacterized ABC transporter ATP-binding protein YadG</fullName>
    </recommendedName>
</protein>
<gene>
    <name type="primary">yadG</name>
    <name type="ordered locus">b0127</name>
    <name type="ordered locus">JW0123</name>
</gene>
<proteinExistence type="evidence at protein level"/>
<organism>
    <name type="scientific">Escherichia coli (strain K12)</name>
    <dbReference type="NCBI Taxonomy" id="83333"/>
    <lineage>
        <taxon>Bacteria</taxon>
        <taxon>Pseudomonadati</taxon>
        <taxon>Pseudomonadota</taxon>
        <taxon>Gammaproteobacteria</taxon>
        <taxon>Enterobacterales</taxon>
        <taxon>Enterobacteriaceae</taxon>
        <taxon>Escherichia</taxon>
    </lineage>
</organism>
<accession>P36879</accession>